<evidence type="ECO:0000250" key="1">
    <source>
        <dbReference type="UniProtKB" id="Q01244"/>
    </source>
</evidence>
<evidence type="ECO:0000255" key="2">
    <source>
        <dbReference type="HAMAP-Rule" id="MF_02219"/>
    </source>
</evidence>
<evidence type="ECO:0000256" key="3">
    <source>
        <dbReference type="SAM" id="MobiDB-lite"/>
    </source>
</evidence>
<evidence type="ECO:0000269" key="4">
    <source>
    </source>
</evidence>
<evidence type="ECO:0000305" key="5"/>
<sequence length="607" mass="63936">MAPACTTAHRRRAPLAAVLMLSLLPLLSPHADAAQVPWHSRTFKYVADNKDLKEVLRDLSASQSIATWISPEVTGTLSGKFETSPQEFLDDLAATYGFVWYYDGAVLRIWGANESKSATLSLGTASTKSLRDALARMRLDDPRFPVRYDEAAHVAVVSGPPGYVDTVSAIAKQVEQGARQRDATEVQVFQLHYAQAADHTTRIGGQDVQIPGMASLLRSMYGARGAPVAAIPGPGANFGRVQPIGGGSSNTFGNAAQGQGGGASGILGLPSSWFGGASSSDRVPVSPPLPGSGAAAAAGSPASVWPELSKGRRDESNPIDAGGGAELASDAPVIEADPRTNAILIRDRPERMQSYGTLIQQLDNRPKLLQIDATIIEIRDGAMQDLGVDWRFHSQHTDIQTGDGRGGQLGFNGALSGAATDGATTPVGGTLTAVLGDAGRYLMTRVSALETTNKAKIVSSPQVATLDNVEAVMDHKQQAFVRVSGYASADLYNLSAGVSLRVLPSVVPGSPNGQMRLDVRIEDGQLGSNTVDGIPVITSSEITTQAFVNEGQSLLIAGYAYDADETDLNAIPGLSKIPLVGNLFKHRQKSGTRMQRLFLLTPHVVSP</sequence>
<protein>
    <recommendedName>
        <fullName evidence="1 2">Type 3 secretion system secretin</fullName>
        <shortName evidence="1 2">T3SS secretin</shortName>
    </recommendedName>
    <alternativeName>
        <fullName>Hypersensitivity response secretion protein HrpA1</fullName>
    </alternativeName>
</protein>
<feature type="signal peptide" evidence="2">
    <location>
        <begin position="1"/>
        <end position="33"/>
    </location>
</feature>
<feature type="chain" id="PRO_0000013110" description="Type 3 secretion system secretin" evidence="2">
    <location>
        <begin position="34"/>
        <end position="607"/>
    </location>
</feature>
<feature type="region of interest" description="Disordered" evidence="3">
    <location>
        <begin position="277"/>
        <end position="332"/>
    </location>
</feature>
<feature type="compositionally biased region" description="Low complexity" evidence="3">
    <location>
        <begin position="291"/>
        <end position="306"/>
    </location>
</feature>
<name>SCTC_XANEU</name>
<organism>
    <name type="scientific">Xanthomonas euvesicatoria</name>
    <dbReference type="NCBI Taxonomy" id="456327"/>
    <lineage>
        <taxon>Bacteria</taxon>
        <taxon>Pseudomonadati</taxon>
        <taxon>Pseudomonadota</taxon>
        <taxon>Gammaproteobacteria</taxon>
        <taxon>Lysobacterales</taxon>
        <taxon>Lysobacteraceae</taxon>
        <taxon>Xanthomonas</taxon>
    </lineage>
</organism>
<gene>
    <name evidence="1 2" type="primary">sctC</name>
    <name type="synonym">hrpA1</name>
</gene>
<dbReference type="EMBL" id="M99173">
    <property type="protein sequence ID" value="AAA27603.1"/>
    <property type="molecule type" value="Genomic_DNA"/>
</dbReference>
<dbReference type="EMBL" id="U33548">
    <property type="protein sequence ID" value="AAB08464.1"/>
    <property type="molecule type" value="Genomic_DNA"/>
</dbReference>
<dbReference type="RefSeq" id="WP_011346107.1">
    <property type="nucleotide sequence ID" value="NZ_QFAL01000063.1"/>
</dbReference>
<dbReference type="SMR" id="P80151"/>
<dbReference type="PATRIC" id="fig|456327.29.peg.3427"/>
<dbReference type="OMA" id="RYLMARI"/>
<dbReference type="GO" id="GO:0009279">
    <property type="term" value="C:cell outer membrane"/>
    <property type="evidence" value="ECO:0007669"/>
    <property type="project" value="UniProtKB-SubCell"/>
</dbReference>
<dbReference type="GO" id="GO:0015627">
    <property type="term" value="C:type II protein secretion system complex"/>
    <property type="evidence" value="ECO:0007669"/>
    <property type="project" value="TreeGrafter"/>
</dbReference>
<dbReference type="GO" id="GO:0030257">
    <property type="term" value="C:type III protein secretion system complex"/>
    <property type="evidence" value="ECO:0007669"/>
    <property type="project" value="UniProtKB-UniRule"/>
</dbReference>
<dbReference type="GO" id="GO:0030254">
    <property type="term" value="P:protein secretion by the type III secretion system"/>
    <property type="evidence" value="ECO:0007669"/>
    <property type="project" value="UniProtKB-UniRule"/>
</dbReference>
<dbReference type="GO" id="GO:0052040">
    <property type="term" value="P:symbiont-mediated perturbation of host programmed cell death"/>
    <property type="evidence" value="ECO:0007669"/>
    <property type="project" value="UniProtKB-KW"/>
</dbReference>
<dbReference type="Gene3D" id="3.30.1370.120">
    <property type="match status" value="2"/>
</dbReference>
<dbReference type="Gene3D" id="3.55.50.30">
    <property type="match status" value="1"/>
</dbReference>
<dbReference type="HAMAP" id="MF_02219">
    <property type="entry name" value="Type_III_secretin"/>
    <property type="match status" value="1"/>
</dbReference>
<dbReference type="InterPro" id="IPR050810">
    <property type="entry name" value="Bact_Secretion_Sys_Channel"/>
</dbReference>
<dbReference type="InterPro" id="IPR005644">
    <property type="entry name" value="NolW-like"/>
</dbReference>
<dbReference type="InterPro" id="IPR038591">
    <property type="entry name" value="NolW-like_sf"/>
</dbReference>
<dbReference type="InterPro" id="IPR004846">
    <property type="entry name" value="T2SS/T3SS_dom"/>
</dbReference>
<dbReference type="InterPro" id="IPR004845">
    <property type="entry name" value="T2SS_GspD_CS"/>
</dbReference>
<dbReference type="InterPro" id="IPR049034">
    <property type="entry name" value="T3S_SPI-1_N0"/>
</dbReference>
<dbReference type="InterPro" id="IPR003522">
    <property type="entry name" value="T3SS_OM_pore_YscC"/>
</dbReference>
<dbReference type="NCBIfam" id="TIGR02516">
    <property type="entry name" value="type_III_yscC"/>
    <property type="match status" value="1"/>
</dbReference>
<dbReference type="PANTHER" id="PTHR30332">
    <property type="entry name" value="PROBABLE GENERAL SECRETION PATHWAY PROTEIN D"/>
    <property type="match status" value="1"/>
</dbReference>
<dbReference type="PANTHER" id="PTHR30332:SF5">
    <property type="entry name" value="SPI-1 TYPE 3 SECRETION SYSTEM SECRETIN"/>
    <property type="match status" value="1"/>
</dbReference>
<dbReference type="Pfam" id="PF00263">
    <property type="entry name" value="Secretin"/>
    <property type="match status" value="1"/>
</dbReference>
<dbReference type="Pfam" id="PF03958">
    <property type="entry name" value="Secretin_N"/>
    <property type="match status" value="2"/>
</dbReference>
<dbReference type="Pfam" id="PF21304">
    <property type="entry name" value="T3S_SPI-1_N0"/>
    <property type="match status" value="1"/>
</dbReference>
<dbReference type="PRINTS" id="PR01337">
    <property type="entry name" value="TYPE3OMGPROT"/>
</dbReference>
<dbReference type="PROSITE" id="PS00875">
    <property type="entry name" value="T2SP_D"/>
    <property type="match status" value="1"/>
</dbReference>
<reference key="1">
    <citation type="journal article" date="1992" name="Mol. Plant Microbe Interact.">
        <title>Determinants of pathogenicity in Xanthomonas campestris pv. vesicatoria are related to proteins involved in secretion in bacterial pathogens of animals.</title>
        <authorList>
            <person name="Fenselau S."/>
            <person name="Balbo I."/>
            <person name="Bonas U."/>
        </authorList>
    </citation>
    <scope>NUCLEOTIDE SEQUENCE [GENOMIC DNA]</scope>
    <scope>FUNCTION</scope>
    <source>
        <strain>Isolate 75-3</strain>
    </source>
</reference>
<comment type="function">
    <text evidence="2 4">Component of the type III secretion system (T3SS), also called injectisome, which is used to inject bacterial effector proteins into eukaryotic host cells. Forms a ring-shaped multimeric structure with an apparent central pore in the outer membrane (By similarity). Necessary for both basic pathogenicity and the induction of the hypersensitive response in resistant plants (PubMed:1472717).</text>
</comment>
<comment type="subunit">
    <text evidence="2">The core secretion machinery of the T3SS is composed of approximately 20 different proteins, including cytoplasmic components, a base, an export apparatus and a needle. This subunit is part of the base, which anchors the injectisome in the bacterial cell envelope. Forms a stable homooligomeric complex.</text>
</comment>
<comment type="subcellular location">
    <subcellularLocation>
        <location evidence="2">Cell outer membrane</location>
    </subcellularLocation>
</comment>
<comment type="similarity">
    <text evidence="2 5">Belongs to the bacterial secretin family. T3SS SctC subfamily.</text>
</comment>
<proteinExistence type="inferred from homology"/>
<keyword id="KW-0998">Cell outer membrane</keyword>
<keyword id="KW-0928">Hypersensitive response elicitation</keyword>
<keyword id="KW-0472">Membrane</keyword>
<keyword id="KW-0653">Protein transport</keyword>
<keyword id="KW-0732">Signal</keyword>
<keyword id="KW-0811">Translocation</keyword>
<keyword id="KW-0813">Transport</keyword>
<keyword id="KW-0843">Virulence</keyword>
<accession>P80151</accession>